<accession>Q8PEX3</accession>
<keyword id="KW-0997">Cell inner membrane</keyword>
<keyword id="KW-1003">Cell membrane</keyword>
<keyword id="KW-0472">Membrane</keyword>
<keyword id="KW-0653">Protein transport</keyword>
<keyword id="KW-0811">Translocation</keyword>
<keyword id="KW-0812">Transmembrane</keyword>
<keyword id="KW-1133">Transmembrane helix</keyword>
<keyword id="KW-0813">Transport</keyword>
<reference key="1">
    <citation type="journal article" date="2002" name="Nature">
        <title>Comparison of the genomes of two Xanthomonas pathogens with differing host specificities.</title>
        <authorList>
            <person name="da Silva A.C.R."/>
            <person name="Ferro J.A."/>
            <person name="Reinach F.C."/>
            <person name="Farah C.S."/>
            <person name="Furlan L.R."/>
            <person name="Quaggio R.B."/>
            <person name="Monteiro-Vitorello C.B."/>
            <person name="Van Sluys M.A."/>
            <person name="Almeida N.F. Jr."/>
            <person name="Alves L.M.C."/>
            <person name="do Amaral A.M."/>
            <person name="Bertolini M.C."/>
            <person name="Camargo L.E.A."/>
            <person name="Camarotte G."/>
            <person name="Cannavan F."/>
            <person name="Cardozo J."/>
            <person name="Chambergo F."/>
            <person name="Ciapina L.P."/>
            <person name="Cicarelli R.M.B."/>
            <person name="Coutinho L.L."/>
            <person name="Cursino-Santos J.R."/>
            <person name="El-Dorry H."/>
            <person name="Faria J.B."/>
            <person name="Ferreira A.J.S."/>
            <person name="Ferreira R.C.C."/>
            <person name="Ferro M.I.T."/>
            <person name="Formighieri E.F."/>
            <person name="Franco M.C."/>
            <person name="Greggio C.C."/>
            <person name="Gruber A."/>
            <person name="Katsuyama A.M."/>
            <person name="Kishi L.T."/>
            <person name="Leite R.P."/>
            <person name="Lemos E.G.M."/>
            <person name="Lemos M.V.F."/>
            <person name="Locali E.C."/>
            <person name="Machado M.A."/>
            <person name="Madeira A.M.B.N."/>
            <person name="Martinez-Rossi N.M."/>
            <person name="Martins E.C."/>
            <person name="Meidanis J."/>
            <person name="Menck C.F.M."/>
            <person name="Miyaki C.Y."/>
            <person name="Moon D.H."/>
            <person name="Moreira L.M."/>
            <person name="Novo M.T.M."/>
            <person name="Okura V.K."/>
            <person name="Oliveira M.C."/>
            <person name="Oliveira V.R."/>
            <person name="Pereira H.A."/>
            <person name="Rossi A."/>
            <person name="Sena J.A.D."/>
            <person name="Silva C."/>
            <person name="de Souza R.F."/>
            <person name="Spinola L.A.F."/>
            <person name="Takita M.A."/>
            <person name="Tamura R.E."/>
            <person name="Teixeira E.C."/>
            <person name="Tezza R.I.D."/>
            <person name="Trindade dos Santos M."/>
            <person name="Truffi D."/>
            <person name="Tsai S.M."/>
            <person name="White F.F."/>
            <person name="Setubal J.C."/>
            <person name="Kitajima J.P."/>
        </authorList>
    </citation>
    <scope>NUCLEOTIDE SEQUENCE [LARGE SCALE GENOMIC DNA]</scope>
    <source>
        <strain>306</strain>
    </source>
</reference>
<dbReference type="EMBL" id="AE008923">
    <property type="protein sequence ID" value="AAM39052.1"/>
    <property type="molecule type" value="Genomic_DNA"/>
</dbReference>
<dbReference type="RefSeq" id="WP_003484968.1">
    <property type="nucleotide sequence ID" value="NC_003919.1"/>
</dbReference>
<dbReference type="SMR" id="Q8PEX3"/>
<dbReference type="GeneID" id="66913199"/>
<dbReference type="KEGG" id="xac:XAC4217"/>
<dbReference type="eggNOG" id="COG1826">
    <property type="taxonomic scope" value="Bacteria"/>
</dbReference>
<dbReference type="HOGENOM" id="CLU_086034_1_1_6"/>
<dbReference type="Proteomes" id="UP000000576">
    <property type="component" value="Chromosome"/>
</dbReference>
<dbReference type="GO" id="GO:0033281">
    <property type="term" value="C:TAT protein transport complex"/>
    <property type="evidence" value="ECO:0007669"/>
    <property type="project" value="UniProtKB-UniRule"/>
</dbReference>
<dbReference type="GO" id="GO:0008320">
    <property type="term" value="F:protein transmembrane transporter activity"/>
    <property type="evidence" value="ECO:0007669"/>
    <property type="project" value="UniProtKB-UniRule"/>
</dbReference>
<dbReference type="GO" id="GO:0043953">
    <property type="term" value="P:protein transport by the Tat complex"/>
    <property type="evidence" value="ECO:0007669"/>
    <property type="project" value="UniProtKB-UniRule"/>
</dbReference>
<dbReference type="Gene3D" id="1.20.5.3310">
    <property type="match status" value="1"/>
</dbReference>
<dbReference type="HAMAP" id="MF_00237">
    <property type="entry name" value="TatB"/>
    <property type="match status" value="1"/>
</dbReference>
<dbReference type="InterPro" id="IPR003369">
    <property type="entry name" value="TatA/B/E"/>
</dbReference>
<dbReference type="InterPro" id="IPR018448">
    <property type="entry name" value="TatB"/>
</dbReference>
<dbReference type="NCBIfam" id="NF003400">
    <property type="entry name" value="PRK04654.1"/>
    <property type="match status" value="1"/>
</dbReference>
<dbReference type="NCBIfam" id="TIGR01410">
    <property type="entry name" value="tatB"/>
    <property type="match status" value="1"/>
</dbReference>
<dbReference type="PANTHER" id="PTHR33162">
    <property type="entry name" value="SEC-INDEPENDENT PROTEIN TRANSLOCASE PROTEIN TATA, CHLOROPLASTIC"/>
    <property type="match status" value="1"/>
</dbReference>
<dbReference type="PANTHER" id="PTHR33162:SF1">
    <property type="entry name" value="SEC-INDEPENDENT PROTEIN TRANSLOCASE PROTEIN TATA, CHLOROPLASTIC"/>
    <property type="match status" value="1"/>
</dbReference>
<dbReference type="Pfam" id="PF02416">
    <property type="entry name" value="TatA_B_E"/>
    <property type="match status" value="1"/>
</dbReference>
<dbReference type="PRINTS" id="PR01506">
    <property type="entry name" value="TATBPROTEIN"/>
</dbReference>
<evidence type="ECO:0000255" key="1">
    <source>
        <dbReference type="HAMAP-Rule" id="MF_00237"/>
    </source>
</evidence>
<evidence type="ECO:0000256" key="2">
    <source>
        <dbReference type="SAM" id="MobiDB-lite"/>
    </source>
</evidence>
<proteinExistence type="inferred from homology"/>
<name>TATB_XANAC</name>
<comment type="function">
    <text evidence="1">Part of the twin-arginine translocation (Tat) system that transports large folded proteins containing a characteristic twin-arginine motif in their signal peptide across membranes. Together with TatC, TatB is part of a receptor directly interacting with Tat signal peptides. TatB may form an oligomeric binding site that transiently accommodates folded Tat precursor proteins before their translocation.</text>
</comment>
<comment type="subunit">
    <text evidence="1">The Tat system comprises two distinct complexes: a TatABC complex, containing multiple copies of TatA, TatB and TatC subunits, and a separate TatA complex, containing only TatA subunits. Substrates initially bind to the TatABC complex, which probably triggers association of the separate TatA complex to form the active translocon.</text>
</comment>
<comment type="subcellular location">
    <subcellularLocation>
        <location evidence="1">Cell inner membrane</location>
        <topology evidence="1">Single-pass membrane protein</topology>
    </subcellularLocation>
</comment>
<comment type="similarity">
    <text evidence="1">Belongs to the TatB family.</text>
</comment>
<protein>
    <recommendedName>
        <fullName evidence="1">Sec-independent protein translocase protein TatB</fullName>
    </recommendedName>
</protein>
<sequence length="208" mass="21971">MFDIGVGELTLIAVVALVVLGPERLPKAARFAGLWVRRARMQWDSVKQELERELEAEELKRSLQDVQASLREAEDQLRNKQQQVEQGARALHDDVSRDIDIRASATPVATPLELAHADWSASPDVDTAAGATDAAGAAHTAPVIAQAQPIAPAPHQTLVPAPHDAIVPAPHAAHLASAPEPVAVVPVDAGTPAASMPSAPAKIQEKQP</sequence>
<organism>
    <name type="scientific">Xanthomonas axonopodis pv. citri (strain 306)</name>
    <dbReference type="NCBI Taxonomy" id="190486"/>
    <lineage>
        <taxon>Bacteria</taxon>
        <taxon>Pseudomonadati</taxon>
        <taxon>Pseudomonadota</taxon>
        <taxon>Gammaproteobacteria</taxon>
        <taxon>Lysobacterales</taxon>
        <taxon>Lysobacteraceae</taxon>
        <taxon>Xanthomonas</taxon>
    </lineage>
</organism>
<gene>
    <name evidence="1" type="primary">tatB</name>
    <name type="ordered locus">XAC4217</name>
</gene>
<feature type="chain" id="PRO_0000192677" description="Sec-independent protein translocase protein TatB">
    <location>
        <begin position="1"/>
        <end position="208"/>
    </location>
</feature>
<feature type="transmembrane region" description="Helical" evidence="1">
    <location>
        <begin position="1"/>
        <end position="21"/>
    </location>
</feature>
<feature type="region of interest" description="Disordered" evidence="2">
    <location>
        <begin position="188"/>
        <end position="208"/>
    </location>
</feature>